<reference key="1">
    <citation type="journal article" date="1993" name="Brain Res. Mol. Brain Res.">
        <title>Early opsin expression in Xenopus embryos precedes photoreceptor differentiation.</title>
        <authorList>
            <person name="Saha M.S."/>
            <person name="Grainger R.M."/>
        </authorList>
    </citation>
    <scope>NUCLEOTIDE SEQUENCE [MRNA]</scope>
</reference>
<reference key="2">
    <citation type="journal article" date="1996" name="J. Biol. Chem.">
        <title>Characterization of the Xenopus rhodopsin gene.</title>
        <authorList>
            <person name="Batni S."/>
            <person name="Scalzetti L.C."/>
            <person name="Moody S.A."/>
            <person name="Knox B.E."/>
        </authorList>
    </citation>
    <scope>NUCLEOTIDE SEQUENCE [GENOMIC DNA / MRNA]</scope>
</reference>
<reference key="3">
    <citation type="journal article" date="2012" name="PLoS ONE">
        <title>Rhodopsin mutant P23H destabilizes rod photoreceptor disk membranes.</title>
        <authorList>
            <person name="Haeri M."/>
            <person name="Knox B.E."/>
        </authorList>
    </citation>
    <scope>SUBCELLULAR LOCATION</scope>
    <scope>MUTAGENESIS OF PRO-23</scope>
</reference>
<reference key="4">
    <citation type="journal article" date="2015" name="PLoS ONE">
        <title>Rhodopsin Forms Nanodomains in Rod Outer Segment Disc Membranes of the Cold-Blooded Xenopus laevis.</title>
        <authorList>
            <person name="Rakshit T."/>
            <person name="Senapati S."/>
            <person name="Sinha S."/>
            <person name="Whited A.M."/>
            <person name="Park P.S."/>
        </authorList>
    </citation>
    <scope>SUBCELLULAR LOCATION</scope>
</reference>
<sequence>MNGTEGPNFYVPMSNKTGVVRSPFDYPQYYLAEPWQYSALAAYMFLLILLGLPINFMTLFVTIQHKKLRTPLNYILLNLVFANHFMVLCGFTVTMYTSMHGYFIFGPTGCYIEGFFATLGGEVALWSLVVLAVERYIVVCKPMANFRFGENHAIMGVAFTWIMALSCAAPPLFGWSRYIPEGMQCSCGVDYYTLKPEVNNESFVIYMFIVHFTIPLIVIFFCYGRLLCTVKEAAAQQQESLTTQKAEKEVTRMVVIMVVFFLICWVPYAYVAFYIFTHQGSNFGPVFMTVPAFFAKSSAIYNPVIYIVLNKQFRNCLITTLCCGKNPFGDEDGSSAATSKTEASSVSSSQVSPA</sequence>
<protein>
    <recommendedName>
        <fullName>Rhodopsin</fullName>
    </recommendedName>
</protein>
<name>OPSD_XENLA</name>
<keyword id="KW-0966">Cell projection</keyword>
<keyword id="KW-0157">Chromophore</keyword>
<keyword id="KW-1015">Disulfide bond</keyword>
<keyword id="KW-0297">G-protein coupled receptor</keyword>
<keyword id="KW-0325">Glycoprotein</keyword>
<keyword id="KW-0449">Lipoprotein</keyword>
<keyword id="KW-0472">Membrane</keyword>
<keyword id="KW-0564">Palmitate</keyword>
<keyword id="KW-0597">Phosphoprotein</keyword>
<keyword id="KW-0600">Photoreceptor protein</keyword>
<keyword id="KW-0675">Receptor</keyword>
<keyword id="KW-1185">Reference proteome</keyword>
<keyword id="KW-0681">Retinal protein</keyword>
<keyword id="KW-0716">Sensory transduction</keyword>
<keyword id="KW-0807">Transducer</keyword>
<keyword id="KW-0812">Transmembrane</keyword>
<keyword id="KW-1133">Transmembrane helix</keyword>
<keyword id="KW-0844">Vision</keyword>
<feature type="chain" id="PRO_0000197727" description="Rhodopsin">
    <location>
        <begin position="1"/>
        <end position="354"/>
    </location>
</feature>
<feature type="topological domain" description="Extracellular" evidence="8">
    <location>
        <begin position="1"/>
        <end position="36"/>
    </location>
</feature>
<feature type="transmembrane region" description="Helical; Name=1" evidence="1">
    <location>
        <begin position="37"/>
        <end position="61"/>
    </location>
</feature>
<feature type="topological domain" description="Cytoplasmic" evidence="8">
    <location>
        <begin position="62"/>
        <end position="73"/>
    </location>
</feature>
<feature type="transmembrane region" description="Helical; Name=2" evidence="1">
    <location>
        <begin position="74"/>
        <end position="96"/>
    </location>
</feature>
<feature type="topological domain" description="Extracellular" evidence="8">
    <location>
        <begin position="97"/>
        <end position="110"/>
    </location>
</feature>
<feature type="transmembrane region" description="Helical; Name=3" evidence="1">
    <location>
        <begin position="111"/>
        <end position="133"/>
    </location>
</feature>
<feature type="topological domain" description="Cytoplasmic" evidence="8">
    <location>
        <begin position="134"/>
        <end position="152"/>
    </location>
</feature>
<feature type="transmembrane region" description="Helical; Name=4" evidence="1">
    <location>
        <begin position="153"/>
        <end position="173"/>
    </location>
</feature>
<feature type="topological domain" description="Extracellular" evidence="8">
    <location>
        <begin position="174"/>
        <end position="202"/>
    </location>
</feature>
<feature type="transmembrane region" description="Helical; Name=5" evidence="1">
    <location>
        <begin position="203"/>
        <end position="224"/>
    </location>
</feature>
<feature type="topological domain" description="Cytoplasmic" evidence="8">
    <location>
        <begin position="225"/>
        <end position="252"/>
    </location>
</feature>
<feature type="transmembrane region" description="Helical; Name=6" evidence="1">
    <location>
        <begin position="253"/>
        <end position="274"/>
    </location>
</feature>
<feature type="topological domain" description="Extracellular" evidence="8">
    <location>
        <begin position="275"/>
        <end position="286"/>
    </location>
</feature>
<feature type="transmembrane region" description="Helical; Name=7" evidence="1">
    <location>
        <begin position="287"/>
        <end position="308"/>
    </location>
</feature>
<feature type="topological domain" description="Cytoplasmic" evidence="8">
    <location>
        <begin position="309"/>
        <end position="354"/>
    </location>
</feature>
<feature type="region of interest" description="Disordered" evidence="5">
    <location>
        <begin position="331"/>
        <end position="354"/>
    </location>
</feature>
<feature type="short sequence motif" description="'Ionic lock' involved in activated form stabilization" evidence="1">
    <location>
        <begin position="134"/>
        <end position="136"/>
    </location>
</feature>
<feature type="compositionally biased region" description="Low complexity" evidence="5">
    <location>
        <begin position="334"/>
        <end position="354"/>
    </location>
</feature>
<feature type="site" description="Plays an important role in the conformation switch to the active conformation" evidence="1">
    <location>
        <position position="113"/>
    </location>
</feature>
<feature type="modified residue" description="N6-(retinylidene)lysine" evidence="1">
    <location>
        <position position="296"/>
    </location>
</feature>
<feature type="lipid moiety-binding region" description="S-palmitoyl cysteine" evidence="1">
    <location>
        <position position="322"/>
    </location>
</feature>
<feature type="lipid moiety-binding region" description="S-palmitoyl cysteine" evidence="1">
    <location>
        <position position="323"/>
    </location>
</feature>
<feature type="glycosylation site" description="N-linked (GlcNAc...) asparagine" evidence="3">
    <location>
        <position position="2"/>
    </location>
</feature>
<feature type="glycosylation site" description="N-linked (GlcNAc...) asparagine" evidence="3">
    <location>
        <position position="15"/>
    </location>
</feature>
<feature type="disulfide bond" evidence="4">
    <location>
        <begin position="110"/>
        <end position="187"/>
    </location>
</feature>
<feature type="mutagenesis site" description="Near loss of rhodopsin accumulation in rod outer segments." evidence="6">
    <original>P</original>
    <variation>H</variation>
    <location>
        <position position="23"/>
    </location>
</feature>
<feature type="sequence conflict" description="In Ref. 2; AAC42232/AAC59901." evidence="8" ref="2">
    <original>P</original>
    <variation>Q</variation>
    <location>
        <position position="107"/>
    </location>
</feature>
<feature type="sequence conflict" description="In Ref. 2; AAC42232/AAC59901." evidence="8" ref="2">
    <original>I</original>
    <variation>M</variation>
    <location>
        <position position="137"/>
    </location>
</feature>
<feature type="sequence conflict" description="In Ref. 2; AAC42232/AAC59901." evidence="8" ref="2">
    <original>L</original>
    <variation>A</variation>
    <location>
        <position position="241"/>
    </location>
</feature>
<proteinExistence type="evidence at protein level"/>
<evidence type="ECO:0000250" key="1">
    <source>
        <dbReference type="UniProtKB" id="P02699"/>
    </source>
</evidence>
<evidence type="ECO:0000250" key="2">
    <source>
        <dbReference type="UniProtKB" id="P08100"/>
    </source>
</evidence>
<evidence type="ECO:0000255" key="3"/>
<evidence type="ECO:0000255" key="4">
    <source>
        <dbReference type="PROSITE-ProRule" id="PRU00521"/>
    </source>
</evidence>
<evidence type="ECO:0000256" key="5">
    <source>
        <dbReference type="SAM" id="MobiDB-lite"/>
    </source>
</evidence>
<evidence type="ECO:0000269" key="6">
    <source>
    </source>
</evidence>
<evidence type="ECO:0000269" key="7">
    <source>
    </source>
</evidence>
<evidence type="ECO:0000305" key="8"/>
<gene>
    <name type="primary">rho</name>
</gene>
<organism>
    <name type="scientific">Xenopus laevis</name>
    <name type="common">African clawed frog</name>
    <dbReference type="NCBI Taxonomy" id="8355"/>
    <lineage>
        <taxon>Eukaryota</taxon>
        <taxon>Metazoa</taxon>
        <taxon>Chordata</taxon>
        <taxon>Craniata</taxon>
        <taxon>Vertebrata</taxon>
        <taxon>Euteleostomi</taxon>
        <taxon>Amphibia</taxon>
        <taxon>Batrachia</taxon>
        <taxon>Anura</taxon>
        <taxon>Pipoidea</taxon>
        <taxon>Pipidae</taxon>
        <taxon>Xenopodinae</taxon>
        <taxon>Xenopus</taxon>
        <taxon>Xenopus</taxon>
    </lineage>
</organism>
<dbReference type="EMBL" id="S62229">
    <property type="protein sequence ID" value="AAB27128.2"/>
    <property type="molecule type" value="mRNA"/>
</dbReference>
<dbReference type="EMBL" id="L04692">
    <property type="protein sequence ID" value="AAB59950.1"/>
    <property type="molecule type" value="mRNA"/>
</dbReference>
<dbReference type="EMBL" id="L07770">
    <property type="protein sequence ID" value="AAC42232.1"/>
    <property type="molecule type" value="mRNA"/>
</dbReference>
<dbReference type="EMBL" id="U23808">
    <property type="protein sequence ID" value="AAC59901.1"/>
    <property type="molecule type" value="Genomic_DNA"/>
</dbReference>
<dbReference type="PIR" id="I51200">
    <property type="entry name" value="I51200"/>
</dbReference>
<dbReference type="SMR" id="P29403"/>
<dbReference type="IntAct" id="P29403">
    <property type="interactions" value="2"/>
</dbReference>
<dbReference type="MINT" id="P29403"/>
<dbReference type="GlyCosmos" id="P29403">
    <property type="glycosylation" value="2 sites, No reported glycans"/>
</dbReference>
<dbReference type="GeneID" id="108714644"/>
<dbReference type="KEGG" id="xla:108714644"/>
<dbReference type="AGR" id="Xenbase:XB-GENE-18034123"/>
<dbReference type="CTD" id="108714644"/>
<dbReference type="Xenbase" id="XB-GENE-18034123">
    <property type="gene designation" value="rho.2.L"/>
</dbReference>
<dbReference type="OrthoDB" id="5962323at2759"/>
<dbReference type="Proteomes" id="UP000186698">
    <property type="component" value="Chromosome 4L"/>
</dbReference>
<dbReference type="Bgee" id="108714644">
    <property type="expression patterns" value="Expressed in camera-type eye and 7 other cell types or tissues"/>
</dbReference>
<dbReference type="GO" id="GO:0016020">
    <property type="term" value="C:membrane"/>
    <property type="evidence" value="ECO:0000250"/>
    <property type="project" value="UniProtKB"/>
</dbReference>
<dbReference type="GO" id="GO:0097381">
    <property type="term" value="C:photoreceptor disc membrane"/>
    <property type="evidence" value="ECO:0000250"/>
    <property type="project" value="UniProtKB"/>
</dbReference>
<dbReference type="GO" id="GO:0001750">
    <property type="term" value="C:photoreceptor outer segment"/>
    <property type="evidence" value="ECO:0000318"/>
    <property type="project" value="GO_Central"/>
</dbReference>
<dbReference type="GO" id="GO:0005886">
    <property type="term" value="C:plasma membrane"/>
    <property type="evidence" value="ECO:0000250"/>
    <property type="project" value="UniProtKB"/>
</dbReference>
<dbReference type="GO" id="GO:0005502">
    <property type="term" value="F:11-cis retinal binding"/>
    <property type="evidence" value="ECO:0000250"/>
    <property type="project" value="UniProtKB"/>
</dbReference>
<dbReference type="GO" id="GO:0008020">
    <property type="term" value="F:G protein-coupled photoreceptor activity"/>
    <property type="evidence" value="ECO:0000250"/>
    <property type="project" value="UniProtKB"/>
</dbReference>
<dbReference type="GO" id="GO:0016038">
    <property type="term" value="P:absorption of visible light"/>
    <property type="evidence" value="ECO:0000250"/>
    <property type="project" value="UniProtKB"/>
</dbReference>
<dbReference type="GO" id="GO:0071482">
    <property type="term" value="P:cellular response to light stimulus"/>
    <property type="evidence" value="ECO:0000318"/>
    <property type="project" value="GO_Central"/>
</dbReference>
<dbReference type="GO" id="GO:0016056">
    <property type="term" value="P:G protein-coupled opsin signaling pathway"/>
    <property type="evidence" value="ECO:0000250"/>
    <property type="project" value="UniProtKB"/>
</dbReference>
<dbReference type="GO" id="GO:0007186">
    <property type="term" value="P:G protein-coupled receptor signaling pathway"/>
    <property type="evidence" value="ECO:0000318"/>
    <property type="project" value="GO_Central"/>
</dbReference>
<dbReference type="GO" id="GO:0007602">
    <property type="term" value="P:phototransduction"/>
    <property type="evidence" value="ECO:0000318"/>
    <property type="project" value="GO_Central"/>
</dbReference>
<dbReference type="GO" id="GO:0007601">
    <property type="term" value="P:visual perception"/>
    <property type="evidence" value="ECO:0007669"/>
    <property type="project" value="UniProtKB-KW"/>
</dbReference>
<dbReference type="CDD" id="cd15080">
    <property type="entry name" value="7tmA_MWS_opsin"/>
    <property type="match status" value="1"/>
</dbReference>
<dbReference type="FunFam" id="1.20.1070.10:FF:000018">
    <property type="entry name" value="Rhodopsin"/>
    <property type="match status" value="1"/>
</dbReference>
<dbReference type="Gene3D" id="1.20.1070.10">
    <property type="entry name" value="Rhodopsin 7-helix transmembrane proteins"/>
    <property type="match status" value="1"/>
</dbReference>
<dbReference type="InterPro" id="IPR050125">
    <property type="entry name" value="GPCR_opsins"/>
</dbReference>
<dbReference type="InterPro" id="IPR000276">
    <property type="entry name" value="GPCR_Rhodpsn"/>
</dbReference>
<dbReference type="InterPro" id="IPR017452">
    <property type="entry name" value="GPCR_Rhodpsn_7TM"/>
</dbReference>
<dbReference type="InterPro" id="IPR001760">
    <property type="entry name" value="Opsin"/>
</dbReference>
<dbReference type="InterPro" id="IPR027430">
    <property type="entry name" value="Retinal_BS"/>
</dbReference>
<dbReference type="InterPro" id="IPR000732">
    <property type="entry name" value="Rhodopsin"/>
</dbReference>
<dbReference type="InterPro" id="IPR019477">
    <property type="entry name" value="Rhodopsin_N"/>
</dbReference>
<dbReference type="PANTHER" id="PTHR24240">
    <property type="entry name" value="OPSIN"/>
    <property type="match status" value="1"/>
</dbReference>
<dbReference type="Pfam" id="PF00001">
    <property type="entry name" value="7tm_1"/>
    <property type="match status" value="1"/>
</dbReference>
<dbReference type="Pfam" id="PF10413">
    <property type="entry name" value="Rhodopsin_N"/>
    <property type="match status" value="1"/>
</dbReference>
<dbReference type="PRINTS" id="PR00237">
    <property type="entry name" value="GPCRRHODOPSN"/>
</dbReference>
<dbReference type="PRINTS" id="PR00238">
    <property type="entry name" value="OPSIN"/>
</dbReference>
<dbReference type="PRINTS" id="PR00579">
    <property type="entry name" value="RHODOPSIN"/>
</dbReference>
<dbReference type="SUPFAM" id="SSF81321">
    <property type="entry name" value="Family A G protein-coupled receptor-like"/>
    <property type="match status" value="1"/>
</dbReference>
<dbReference type="PROSITE" id="PS00237">
    <property type="entry name" value="G_PROTEIN_RECEP_F1_1"/>
    <property type="match status" value="1"/>
</dbReference>
<dbReference type="PROSITE" id="PS50262">
    <property type="entry name" value="G_PROTEIN_RECEP_F1_2"/>
    <property type="match status" value="1"/>
</dbReference>
<dbReference type="PROSITE" id="PS00238">
    <property type="entry name" value="OPSIN"/>
    <property type="match status" value="1"/>
</dbReference>
<comment type="function">
    <text evidence="1 2">Photoreceptor required for image-forming vision at low light intensity. Required for photoreceptor cell viability after birth (By similarity). Light-induced isomerization of 11-cis to all-trans retinal triggers a conformational change that activates signaling via G-proteins. Subsequent receptor phosphorylation mediates displacement of the bound G-protein alpha subunit by arrestin and terminates signaling (By similarity).</text>
</comment>
<comment type="interaction">
    <interactant intactId="EBI-7490990">
        <id>P29403</id>
    </interactant>
    <interactant intactId="EBI-7491013">
        <id>P51644</id>
        <label>arf4</label>
    </interactant>
    <organismsDiffer>false</organismsDiffer>
    <experiments>2</experiments>
</comment>
<comment type="subcellular location">
    <subcellularLocation>
        <location evidence="7">Membrane</location>
        <topology evidence="2">Multi-pass membrane protein</topology>
    </subcellularLocation>
    <subcellularLocation>
        <location evidence="6 7">Cell projection</location>
        <location evidence="6 7">Cilium</location>
        <location evidence="6 7">Photoreceptor outer segment</location>
    </subcellularLocation>
    <text evidence="6">Synthesized in the inner segment (IS) of rod photoreceptor cells before vectorial transport to disk membranes in the rod outer segment (OS) photosensory cilia.</text>
</comment>
<comment type="PTM">
    <text evidence="1">Contains one covalently linked retinal chromophore. Upon light absorption, the covalently bound 11-cis-retinal is converted to all-trans-retinal. After hydrolysis of the Schiff base and release of the covalently bound all-trans-retinal, active rhodopsin is regenerated by binding of a fresh molecule of 11-cis-retinal.</text>
</comment>
<comment type="similarity">
    <text evidence="4">Belongs to the G-protein coupled receptor 1 family. Opsin subfamily.</text>
</comment>
<accession>P29403</accession>